<feature type="chain" id="PRO_0000410137" description="Protein phosphatase methylesterase 1">
    <location>
        <begin position="1"/>
        <end position="422"/>
    </location>
</feature>
<feature type="region of interest" description="Disordered" evidence="2">
    <location>
        <begin position="1"/>
        <end position="27"/>
    </location>
</feature>
<feature type="active site" evidence="1">
    <location>
        <position position="207"/>
    </location>
</feature>
<feature type="active site" evidence="1">
    <location>
        <position position="234"/>
    </location>
</feature>
<feature type="active site" evidence="1">
    <location>
        <position position="371"/>
    </location>
</feature>
<reference key="1">
    <citation type="journal article" date="2005" name="Science">
        <title>The genome of the basidiomycetous yeast and human pathogen Cryptococcus neoformans.</title>
        <authorList>
            <person name="Loftus B.J."/>
            <person name="Fung E."/>
            <person name="Roncaglia P."/>
            <person name="Rowley D."/>
            <person name="Amedeo P."/>
            <person name="Bruno D."/>
            <person name="Vamathevan J."/>
            <person name="Miranda M."/>
            <person name="Anderson I.J."/>
            <person name="Fraser J.A."/>
            <person name="Allen J.E."/>
            <person name="Bosdet I.E."/>
            <person name="Brent M.R."/>
            <person name="Chiu R."/>
            <person name="Doering T.L."/>
            <person name="Donlin M.J."/>
            <person name="D'Souza C.A."/>
            <person name="Fox D.S."/>
            <person name="Grinberg V."/>
            <person name="Fu J."/>
            <person name="Fukushima M."/>
            <person name="Haas B.J."/>
            <person name="Huang J.C."/>
            <person name="Janbon G."/>
            <person name="Jones S.J.M."/>
            <person name="Koo H.L."/>
            <person name="Krzywinski M.I."/>
            <person name="Kwon-Chung K.J."/>
            <person name="Lengeler K.B."/>
            <person name="Maiti R."/>
            <person name="Marra M.A."/>
            <person name="Marra R.E."/>
            <person name="Mathewson C.A."/>
            <person name="Mitchell T.G."/>
            <person name="Pertea M."/>
            <person name="Riggs F.R."/>
            <person name="Salzberg S.L."/>
            <person name="Schein J.E."/>
            <person name="Shvartsbeyn A."/>
            <person name="Shin H."/>
            <person name="Shumway M."/>
            <person name="Specht C.A."/>
            <person name="Suh B.B."/>
            <person name="Tenney A."/>
            <person name="Utterback T.R."/>
            <person name="Wickes B.L."/>
            <person name="Wortman J.R."/>
            <person name="Wye N.H."/>
            <person name="Kronstad J.W."/>
            <person name="Lodge J.K."/>
            <person name="Heitman J."/>
            <person name="Davis R.W."/>
            <person name="Fraser C.M."/>
            <person name="Hyman R.W."/>
        </authorList>
    </citation>
    <scope>NUCLEOTIDE SEQUENCE [LARGE SCALE GENOMIC DNA]</scope>
    <source>
        <strain>B-3501A</strain>
    </source>
</reference>
<gene>
    <name type="primary">PPE1</name>
    <name type="ordered locus">CNBH2760</name>
</gene>
<protein>
    <recommendedName>
        <fullName>Protein phosphatase methylesterase 1</fullName>
        <shortName>PME-1</shortName>
        <ecNumber>3.1.1.89</ecNumber>
    </recommendedName>
</protein>
<evidence type="ECO:0000250" key="1"/>
<evidence type="ECO:0000256" key="2">
    <source>
        <dbReference type="SAM" id="MobiDB-lite"/>
    </source>
</evidence>
<evidence type="ECO:0000305" key="3"/>
<name>PPME1_CRYNB</name>
<keyword id="KW-0378">Hydrolase</keyword>
<keyword id="KW-0719">Serine esterase</keyword>
<organism>
    <name type="scientific">Cryptococcus neoformans var. neoformans serotype D (strain B-3501A)</name>
    <name type="common">Filobasidiella neoformans</name>
    <dbReference type="NCBI Taxonomy" id="283643"/>
    <lineage>
        <taxon>Eukaryota</taxon>
        <taxon>Fungi</taxon>
        <taxon>Dikarya</taxon>
        <taxon>Basidiomycota</taxon>
        <taxon>Agaricomycotina</taxon>
        <taxon>Tremellomycetes</taxon>
        <taxon>Tremellales</taxon>
        <taxon>Cryptococcaceae</taxon>
        <taxon>Cryptococcus</taxon>
        <taxon>Cryptococcus neoformans species complex</taxon>
    </lineage>
</organism>
<proteinExistence type="inferred from homology"/>
<dbReference type="EC" id="3.1.1.89"/>
<dbReference type="EMBL" id="AAEY01000042">
    <property type="protein sequence ID" value="EAL19177.1"/>
    <property type="molecule type" value="Genomic_DNA"/>
</dbReference>
<dbReference type="RefSeq" id="XP_773824.1">
    <property type="nucleotide sequence ID" value="XM_768731.1"/>
</dbReference>
<dbReference type="SMR" id="P0CO63"/>
<dbReference type="ESTHER" id="cryne-ppme1">
    <property type="family name" value="PPase_methylesterase_euk"/>
</dbReference>
<dbReference type="GeneID" id="4937799"/>
<dbReference type="KEGG" id="cnb:CNBH2760"/>
<dbReference type="VEuPathDB" id="FungiDB:CNBH2760"/>
<dbReference type="HOGENOM" id="CLU_024818_3_1_1"/>
<dbReference type="OrthoDB" id="8467at5206"/>
<dbReference type="GO" id="GO:0051722">
    <property type="term" value="F:protein C-terminal methylesterase activity"/>
    <property type="evidence" value="ECO:0007669"/>
    <property type="project" value="UniProtKB-EC"/>
</dbReference>
<dbReference type="FunFam" id="3.40.50.1820:FF:000412">
    <property type="entry name" value="Protein phosphatase methylesterase 1"/>
    <property type="match status" value="1"/>
</dbReference>
<dbReference type="Gene3D" id="3.40.50.1820">
    <property type="entry name" value="alpha/beta hydrolase"/>
    <property type="match status" value="1"/>
</dbReference>
<dbReference type="InterPro" id="IPR000073">
    <property type="entry name" value="AB_hydrolase_1"/>
</dbReference>
<dbReference type="InterPro" id="IPR029058">
    <property type="entry name" value="AB_hydrolase_fold"/>
</dbReference>
<dbReference type="InterPro" id="IPR016812">
    <property type="entry name" value="PPase_methylesterase_euk"/>
</dbReference>
<dbReference type="PANTHER" id="PTHR14189:SF0">
    <property type="entry name" value="PROTEIN PHOSPHATASE METHYLESTERASE 1"/>
    <property type="match status" value="1"/>
</dbReference>
<dbReference type="PANTHER" id="PTHR14189">
    <property type="entry name" value="PROTEIN PHOSPHATASE METHYLESTERASE-1 RELATED"/>
    <property type="match status" value="1"/>
</dbReference>
<dbReference type="Pfam" id="PF12697">
    <property type="entry name" value="Abhydrolase_6"/>
    <property type="match status" value="1"/>
</dbReference>
<dbReference type="PIRSF" id="PIRSF022950">
    <property type="entry name" value="PPase_methylesterase_euk"/>
    <property type="match status" value="1"/>
</dbReference>
<dbReference type="SUPFAM" id="SSF53474">
    <property type="entry name" value="alpha/beta-Hydrolases"/>
    <property type="match status" value="1"/>
</dbReference>
<comment type="function">
    <text evidence="1">Demethylates proteins that have been reversibly carboxymethylated. Demethylates the phosphatase PP2A catalytic subunit (By similarity).</text>
</comment>
<comment type="catalytic activity">
    <reaction>
        <text>[phosphatase 2A protein]-C-terminal L-leucine methyl ester + H2O = [phosphatase 2A protein]-C-terminal L-leucine + methanol + H(+)</text>
        <dbReference type="Rhea" id="RHEA:48548"/>
        <dbReference type="Rhea" id="RHEA-COMP:12134"/>
        <dbReference type="Rhea" id="RHEA-COMP:12135"/>
        <dbReference type="ChEBI" id="CHEBI:15377"/>
        <dbReference type="ChEBI" id="CHEBI:15378"/>
        <dbReference type="ChEBI" id="CHEBI:17790"/>
        <dbReference type="ChEBI" id="CHEBI:90516"/>
        <dbReference type="ChEBI" id="CHEBI:90517"/>
        <dbReference type="EC" id="3.1.1.89"/>
    </reaction>
</comment>
<comment type="similarity">
    <text evidence="3">Belongs to the AB hydrolase superfamily.</text>
</comment>
<sequence>MSDMFRKSVLNKLPHLPPTRAPWADESEPIEEIDEEDEQLDGIGEFKPATMGPSKHDTQDYSPLSASTFFAQAAEVQPPSTPCTFRVYLTPPNLSIASTNAGTPPGPSGLRTQQQTNRHGTYLVCHHGGGASGLGFAPLAREVKAKGNGEMGVLAFDCRGHGKTSTSDPNLELDLSHDTLLSDFMAIIEMMFPDPKESPSLILLGHSMGAAPVVSAAPELQKKGYTIPGVVVLDVVEGTAVESLPLMKSVLSKRPESFRSVIDAIYWHVTSNSIRNVESARVSVPHIIVPAPSSSSSDPSANPGGKQVWRTNLVGTEPYWEGWYKGLSQRFLRTKCARLLVLAGQERLDRELMVGQMQGKFQLEVMSDVGHYLHEDNPAGLAATLITFWHRNTRVLVLPPKIGAPGPGARGGPVEVKQVGQQ</sequence>
<accession>P0CO63</accession>
<accession>Q55N08</accession>
<accession>Q5KBD8</accession>